<keyword id="KW-0227">DNA damage</keyword>
<keyword id="KW-0234">DNA repair</keyword>
<keyword id="KW-0235">DNA replication</keyword>
<keyword id="KW-0436">Ligase</keyword>
<keyword id="KW-0460">Magnesium</keyword>
<keyword id="KW-0464">Manganese</keyword>
<keyword id="KW-0479">Metal-binding</keyword>
<keyword id="KW-0520">NAD</keyword>
<keyword id="KW-0862">Zinc</keyword>
<organism>
    <name type="scientific">Desulfitobacterium hafniense (strain DSM 10664 / DCB-2)</name>
    <dbReference type="NCBI Taxonomy" id="272564"/>
    <lineage>
        <taxon>Bacteria</taxon>
        <taxon>Bacillati</taxon>
        <taxon>Bacillota</taxon>
        <taxon>Clostridia</taxon>
        <taxon>Eubacteriales</taxon>
        <taxon>Desulfitobacteriaceae</taxon>
        <taxon>Desulfitobacterium</taxon>
    </lineage>
</organism>
<protein>
    <recommendedName>
        <fullName evidence="1">DNA ligase</fullName>
        <ecNumber evidence="1">6.5.1.2</ecNumber>
    </recommendedName>
    <alternativeName>
        <fullName evidence="1">Polydeoxyribonucleotide synthase [NAD(+)]</fullName>
    </alternativeName>
</protein>
<comment type="function">
    <text evidence="1">DNA ligase that catalyzes the formation of phosphodiester linkages between 5'-phosphoryl and 3'-hydroxyl groups in double-stranded DNA using NAD as a coenzyme and as the energy source for the reaction. It is essential for DNA replication and repair of damaged DNA.</text>
</comment>
<comment type="catalytic activity">
    <reaction evidence="1">
        <text>NAD(+) + (deoxyribonucleotide)n-3'-hydroxyl + 5'-phospho-(deoxyribonucleotide)m = (deoxyribonucleotide)n+m + AMP + beta-nicotinamide D-nucleotide.</text>
        <dbReference type="EC" id="6.5.1.2"/>
    </reaction>
</comment>
<comment type="cofactor">
    <cofactor evidence="1">
        <name>Mg(2+)</name>
        <dbReference type="ChEBI" id="CHEBI:18420"/>
    </cofactor>
    <cofactor evidence="1">
        <name>Mn(2+)</name>
        <dbReference type="ChEBI" id="CHEBI:29035"/>
    </cofactor>
</comment>
<comment type="similarity">
    <text evidence="1">Belongs to the NAD-dependent DNA ligase family. LigA subfamily.</text>
</comment>
<sequence length="659" mass="73003">MSDVSQRIEALREQIEEANYQYYGLDQPTLSDAEYDALLQELIRLEKEHPEFLTPDSPSQRVGGYIAKEFPKVRHAEALLSLDNAFDAGDLLEFDRRVRSMVAEVEYVVELKIDGLTVALTYEDGALVRGATRGDGEVGEEITANLKTIPAIPLRLRKQADRLDVRGEGYMPKGSFLRLNQEREEAGQPLFANPRNAAAGSLRQLDSRITAQRKLGYFAYQVLTPEEGELASQTAVLDYLKEQGFSVNPEYRVFSAIEEVIAYCGEMVEKRHNYPYDIDGLVIKVNDIAQQRELGFTAKSPRWAIAYKFPAEQVETVVEDIVIRVGRTGVLTPTAYLTPVFVAGSTVGRATLHNLDNIRAKDVRIGDHVLIQKAGDVIPEVVKILPEKRTGGERIFEMPELCPECQSPVIREEGEAAHRCTSITCPARQREAIIHFVSRNAMNIDGLGPAVIYQLLEAGLIKDAADLYALEYDALVPLERLGKKSAENLLKAIEDSKERGLAPLIFGLGIRHVGEKAGKILAQKYGTMEDLEKAQVEELQEIPDVGPAMAQSVAQFFQQESTHHFLNKLRQAGVVMSAQHSAKPQIFAGKSIVVTGSLQRWDRHYVETMIEEFGGKAASSVSKKTAFVVAGEKAGSKLAKAKELGIPVLSEEEFAELLP</sequence>
<evidence type="ECO:0000255" key="1">
    <source>
        <dbReference type="HAMAP-Rule" id="MF_01588"/>
    </source>
</evidence>
<reference key="1">
    <citation type="journal article" date="2012" name="BMC Microbiol.">
        <title>Genome sequence of Desulfitobacterium hafniense DCB-2, a Gram-positive anaerobe capable of dehalogenation and metal reduction.</title>
        <authorList>
            <person name="Kim S.H."/>
            <person name="Harzman C."/>
            <person name="Davis J.K."/>
            <person name="Hutcheson R."/>
            <person name="Broderick J.B."/>
            <person name="Marsh T.L."/>
            <person name="Tiedje J.M."/>
        </authorList>
    </citation>
    <scope>NUCLEOTIDE SEQUENCE [LARGE SCALE GENOMIC DNA]</scope>
    <source>
        <strain>DSM 10664 / DCB-2</strain>
    </source>
</reference>
<dbReference type="EC" id="6.5.1.2" evidence="1"/>
<dbReference type="EMBL" id="CP001336">
    <property type="protein sequence ID" value="ACL19569.1"/>
    <property type="molecule type" value="Genomic_DNA"/>
</dbReference>
<dbReference type="RefSeq" id="WP_015943486.1">
    <property type="nucleotide sequence ID" value="NC_011830.1"/>
</dbReference>
<dbReference type="SMR" id="B8FP44"/>
<dbReference type="KEGG" id="dhd:Dhaf_1517"/>
<dbReference type="HOGENOM" id="CLU_007764_2_1_9"/>
<dbReference type="Proteomes" id="UP000007726">
    <property type="component" value="Chromosome"/>
</dbReference>
<dbReference type="GO" id="GO:0005829">
    <property type="term" value="C:cytosol"/>
    <property type="evidence" value="ECO:0007669"/>
    <property type="project" value="TreeGrafter"/>
</dbReference>
<dbReference type="GO" id="GO:0003677">
    <property type="term" value="F:DNA binding"/>
    <property type="evidence" value="ECO:0007669"/>
    <property type="project" value="InterPro"/>
</dbReference>
<dbReference type="GO" id="GO:0003911">
    <property type="term" value="F:DNA ligase (NAD+) activity"/>
    <property type="evidence" value="ECO:0007669"/>
    <property type="project" value="UniProtKB-UniRule"/>
</dbReference>
<dbReference type="GO" id="GO:0046872">
    <property type="term" value="F:metal ion binding"/>
    <property type="evidence" value="ECO:0007669"/>
    <property type="project" value="UniProtKB-KW"/>
</dbReference>
<dbReference type="GO" id="GO:0006281">
    <property type="term" value="P:DNA repair"/>
    <property type="evidence" value="ECO:0007669"/>
    <property type="project" value="UniProtKB-KW"/>
</dbReference>
<dbReference type="GO" id="GO:0006260">
    <property type="term" value="P:DNA replication"/>
    <property type="evidence" value="ECO:0007669"/>
    <property type="project" value="UniProtKB-KW"/>
</dbReference>
<dbReference type="CDD" id="cd17748">
    <property type="entry name" value="BRCT_DNA_ligase_like"/>
    <property type="match status" value="1"/>
</dbReference>
<dbReference type="CDD" id="cd00114">
    <property type="entry name" value="LIGANc"/>
    <property type="match status" value="1"/>
</dbReference>
<dbReference type="FunFam" id="1.10.150.20:FF:000006">
    <property type="entry name" value="DNA ligase"/>
    <property type="match status" value="1"/>
</dbReference>
<dbReference type="FunFam" id="1.10.150.20:FF:000007">
    <property type="entry name" value="DNA ligase"/>
    <property type="match status" value="1"/>
</dbReference>
<dbReference type="FunFam" id="1.10.287.610:FF:000002">
    <property type="entry name" value="DNA ligase"/>
    <property type="match status" value="1"/>
</dbReference>
<dbReference type="FunFam" id="2.40.50.140:FF:000012">
    <property type="entry name" value="DNA ligase"/>
    <property type="match status" value="1"/>
</dbReference>
<dbReference type="FunFam" id="3.30.470.30:FF:000001">
    <property type="entry name" value="DNA ligase"/>
    <property type="match status" value="1"/>
</dbReference>
<dbReference type="Gene3D" id="6.20.10.30">
    <property type="match status" value="1"/>
</dbReference>
<dbReference type="Gene3D" id="1.10.150.20">
    <property type="entry name" value="5' to 3' exonuclease, C-terminal subdomain"/>
    <property type="match status" value="2"/>
</dbReference>
<dbReference type="Gene3D" id="3.40.50.10190">
    <property type="entry name" value="BRCT domain"/>
    <property type="match status" value="1"/>
</dbReference>
<dbReference type="Gene3D" id="3.30.470.30">
    <property type="entry name" value="DNA ligase/mRNA capping enzyme"/>
    <property type="match status" value="1"/>
</dbReference>
<dbReference type="Gene3D" id="1.10.287.610">
    <property type="entry name" value="Helix hairpin bin"/>
    <property type="match status" value="1"/>
</dbReference>
<dbReference type="Gene3D" id="2.40.50.140">
    <property type="entry name" value="Nucleic acid-binding proteins"/>
    <property type="match status" value="1"/>
</dbReference>
<dbReference type="HAMAP" id="MF_01588">
    <property type="entry name" value="DNA_ligase_A"/>
    <property type="match status" value="1"/>
</dbReference>
<dbReference type="InterPro" id="IPR001357">
    <property type="entry name" value="BRCT_dom"/>
</dbReference>
<dbReference type="InterPro" id="IPR036420">
    <property type="entry name" value="BRCT_dom_sf"/>
</dbReference>
<dbReference type="InterPro" id="IPR041663">
    <property type="entry name" value="DisA/LigA_HHH"/>
</dbReference>
<dbReference type="InterPro" id="IPR001679">
    <property type="entry name" value="DNA_ligase"/>
</dbReference>
<dbReference type="InterPro" id="IPR033136">
    <property type="entry name" value="DNA_ligase_CS"/>
</dbReference>
<dbReference type="InterPro" id="IPR013839">
    <property type="entry name" value="DNAligase_adenylation"/>
</dbReference>
<dbReference type="InterPro" id="IPR013840">
    <property type="entry name" value="DNAligase_N"/>
</dbReference>
<dbReference type="InterPro" id="IPR003583">
    <property type="entry name" value="Hlx-hairpin-Hlx_DNA-bd_motif"/>
</dbReference>
<dbReference type="InterPro" id="IPR012340">
    <property type="entry name" value="NA-bd_OB-fold"/>
</dbReference>
<dbReference type="InterPro" id="IPR004150">
    <property type="entry name" value="NAD_DNA_ligase_OB"/>
</dbReference>
<dbReference type="InterPro" id="IPR010994">
    <property type="entry name" value="RuvA_2-like"/>
</dbReference>
<dbReference type="InterPro" id="IPR004149">
    <property type="entry name" value="Znf_DNAligase_C4"/>
</dbReference>
<dbReference type="NCBIfam" id="TIGR00575">
    <property type="entry name" value="dnlj"/>
    <property type="match status" value="1"/>
</dbReference>
<dbReference type="NCBIfam" id="NF005932">
    <property type="entry name" value="PRK07956.1"/>
    <property type="match status" value="1"/>
</dbReference>
<dbReference type="PANTHER" id="PTHR23389">
    <property type="entry name" value="CHROMOSOME TRANSMISSION FIDELITY FACTOR 18"/>
    <property type="match status" value="1"/>
</dbReference>
<dbReference type="PANTHER" id="PTHR23389:SF9">
    <property type="entry name" value="DNA LIGASE"/>
    <property type="match status" value="1"/>
</dbReference>
<dbReference type="Pfam" id="PF00533">
    <property type="entry name" value="BRCT"/>
    <property type="match status" value="1"/>
</dbReference>
<dbReference type="Pfam" id="PF01653">
    <property type="entry name" value="DNA_ligase_aden"/>
    <property type="match status" value="1"/>
</dbReference>
<dbReference type="Pfam" id="PF03120">
    <property type="entry name" value="DNA_ligase_OB"/>
    <property type="match status" value="1"/>
</dbReference>
<dbReference type="Pfam" id="PF03119">
    <property type="entry name" value="DNA_ligase_ZBD"/>
    <property type="match status" value="1"/>
</dbReference>
<dbReference type="Pfam" id="PF12826">
    <property type="entry name" value="HHH_2"/>
    <property type="match status" value="1"/>
</dbReference>
<dbReference type="Pfam" id="PF14520">
    <property type="entry name" value="HHH_5"/>
    <property type="match status" value="1"/>
</dbReference>
<dbReference type="Pfam" id="PF22745">
    <property type="entry name" value="Nlig-Ia"/>
    <property type="match status" value="1"/>
</dbReference>
<dbReference type="PIRSF" id="PIRSF001604">
    <property type="entry name" value="LigA"/>
    <property type="match status" value="1"/>
</dbReference>
<dbReference type="SMART" id="SM00292">
    <property type="entry name" value="BRCT"/>
    <property type="match status" value="1"/>
</dbReference>
<dbReference type="SMART" id="SM00278">
    <property type="entry name" value="HhH1"/>
    <property type="match status" value="3"/>
</dbReference>
<dbReference type="SMART" id="SM00532">
    <property type="entry name" value="LIGANc"/>
    <property type="match status" value="1"/>
</dbReference>
<dbReference type="SUPFAM" id="SSF52113">
    <property type="entry name" value="BRCT domain"/>
    <property type="match status" value="1"/>
</dbReference>
<dbReference type="SUPFAM" id="SSF56091">
    <property type="entry name" value="DNA ligase/mRNA capping enzyme, catalytic domain"/>
    <property type="match status" value="1"/>
</dbReference>
<dbReference type="SUPFAM" id="SSF50249">
    <property type="entry name" value="Nucleic acid-binding proteins"/>
    <property type="match status" value="1"/>
</dbReference>
<dbReference type="SUPFAM" id="SSF47781">
    <property type="entry name" value="RuvA domain 2-like"/>
    <property type="match status" value="1"/>
</dbReference>
<dbReference type="PROSITE" id="PS50172">
    <property type="entry name" value="BRCT"/>
    <property type="match status" value="1"/>
</dbReference>
<dbReference type="PROSITE" id="PS01056">
    <property type="entry name" value="DNA_LIGASE_N2"/>
    <property type="match status" value="1"/>
</dbReference>
<name>DNLJ_DESHD</name>
<gene>
    <name evidence="1" type="primary">ligA</name>
    <name type="ordered locus">Dhaf_1517</name>
</gene>
<feature type="chain" id="PRO_0000380364" description="DNA ligase">
    <location>
        <begin position="1"/>
        <end position="659"/>
    </location>
</feature>
<feature type="domain" description="BRCT" evidence="1">
    <location>
        <begin position="582"/>
        <end position="659"/>
    </location>
</feature>
<feature type="active site" description="N6-AMP-lysine intermediate" evidence="1">
    <location>
        <position position="112"/>
    </location>
</feature>
<feature type="binding site" evidence="1">
    <location>
        <begin position="32"/>
        <end position="36"/>
    </location>
    <ligand>
        <name>NAD(+)</name>
        <dbReference type="ChEBI" id="CHEBI:57540"/>
    </ligand>
</feature>
<feature type="binding site" evidence="1">
    <location>
        <begin position="81"/>
        <end position="82"/>
    </location>
    <ligand>
        <name>NAD(+)</name>
        <dbReference type="ChEBI" id="CHEBI:57540"/>
    </ligand>
</feature>
<feature type="binding site" evidence="1">
    <location>
        <position position="110"/>
    </location>
    <ligand>
        <name>NAD(+)</name>
        <dbReference type="ChEBI" id="CHEBI:57540"/>
    </ligand>
</feature>
<feature type="binding site" evidence="1">
    <location>
        <position position="133"/>
    </location>
    <ligand>
        <name>NAD(+)</name>
        <dbReference type="ChEBI" id="CHEBI:57540"/>
    </ligand>
</feature>
<feature type="binding site" evidence="1">
    <location>
        <position position="168"/>
    </location>
    <ligand>
        <name>NAD(+)</name>
        <dbReference type="ChEBI" id="CHEBI:57540"/>
    </ligand>
</feature>
<feature type="binding site" evidence="1">
    <location>
        <position position="284"/>
    </location>
    <ligand>
        <name>NAD(+)</name>
        <dbReference type="ChEBI" id="CHEBI:57540"/>
    </ligand>
</feature>
<feature type="binding site" evidence="1">
    <location>
        <position position="308"/>
    </location>
    <ligand>
        <name>NAD(+)</name>
        <dbReference type="ChEBI" id="CHEBI:57540"/>
    </ligand>
</feature>
<feature type="binding site" evidence="1">
    <location>
        <position position="402"/>
    </location>
    <ligand>
        <name>Zn(2+)</name>
        <dbReference type="ChEBI" id="CHEBI:29105"/>
    </ligand>
</feature>
<feature type="binding site" evidence="1">
    <location>
        <position position="405"/>
    </location>
    <ligand>
        <name>Zn(2+)</name>
        <dbReference type="ChEBI" id="CHEBI:29105"/>
    </ligand>
</feature>
<feature type="binding site" evidence="1">
    <location>
        <position position="420"/>
    </location>
    <ligand>
        <name>Zn(2+)</name>
        <dbReference type="ChEBI" id="CHEBI:29105"/>
    </ligand>
</feature>
<feature type="binding site" evidence="1">
    <location>
        <position position="425"/>
    </location>
    <ligand>
        <name>Zn(2+)</name>
        <dbReference type="ChEBI" id="CHEBI:29105"/>
    </ligand>
</feature>
<proteinExistence type="inferred from homology"/>
<accession>B8FP44</accession>